<keyword id="KW-0039">Anion exchange</keyword>
<keyword id="KW-1003">Cell membrane</keyword>
<keyword id="KW-0406">Ion transport</keyword>
<keyword id="KW-0472">Membrane</keyword>
<keyword id="KW-1185">Reference proteome</keyword>
<keyword id="KW-0915">Sodium</keyword>
<keyword id="KW-0739">Sodium transport</keyword>
<keyword id="KW-0812">Transmembrane</keyword>
<keyword id="KW-1133">Transmembrane helix</keyword>
<keyword id="KW-0813">Transport</keyword>
<feature type="chain" id="PRO_0000328921" description="Electrogenic sodium bicarbonate cotransporter 4">
    <location>
        <begin position="1"/>
        <end position="1112"/>
    </location>
</feature>
<feature type="topological domain" description="Cytoplasmic" evidence="2">
    <location>
        <begin position="1"/>
        <end position="513"/>
    </location>
</feature>
<feature type="transmembrane region" description="Helical" evidence="2">
    <location>
        <begin position="514"/>
        <end position="536"/>
    </location>
</feature>
<feature type="topological domain" description="Extracellular" evidence="2">
    <location>
        <begin position="537"/>
        <end position="547"/>
    </location>
</feature>
<feature type="transmembrane region" description="Helical" evidence="2">
    <location>
        <begin position="548"/>
        <end position="579"/>
    </location>
</feature>
<feature type="topological domain" description="Cytoplasmic" evidence="2">
    <location>
        <begin position="580"/>
        <end position="598"/>
    </location>
</feature>
<feature type="transmembrane region" description="Helical" evidence="2">
    <location>
        <begin position="599"/>
        <end position="620"/>
    </location>
</feature>
<feature type="topological domain" description="Extracellular" evidence="2">
    <location>
        <begin position="621"/>
        <end position="734"/>
    </location>
</feature>
<feature type="transmembrane region" description="Helical" evidence="2">
    <location>
        <begin position="735"/>
        <end position="753"/>
    </location>
</feature>
<feature type="topological domain" description="Cytoplasmic" evidence="2">
    <location>
        <begin position="754"/>
        <end position="772"/>
    </location>
</feature>
<feature type="transmembrane region" description="Helical" evidence="2">
    <location>
        <begin position="773"/>
        <end position="792"/>
    </location>
</feature>
<feature type="topological domain" description="Extracellular" evidence="2">
    <location>
        <begin position="793"/>
        <end position="820"/>
    </location>
</feature>
<feature type="transmembrane region" description="Helical" evidence="2">
    <location>
        <begin position="821"/>
        <end position="839"/>
    </location>
</feature>
<feature type="topological domain" description="Cytoplasmic" evidence="2">
    <location>
        <begin position="840"/>
        <end position="858"/>
    </location>
</feature>
<feature type="transmembrane region" description="Helical" evidence="2">
    <location>
        <begin position="859"/>
        <end position="875"/>
    </location>
</feature>
<feature type="topological domain" description="Extracellular" evidence="2">
    <location>
        <begin position="876"/>
        <end position="880"/>
    </location>
</feature>
<feature type="transmembrane region" description="Helical" evidence="2">
    <location>
        <begin position="881"/>
        <end position="900"/>
    </location>
</feature>
<feature type="topological domain" description="Cytoplasmic" evidence="2">
    <location>
        <begin position="901"/>
        <end position="920"/>
    </location>
</feature>
<feature type="transmembrane region" description="Helical" evidence="2">
    <location>
        <begin position="921"/>
        <end position="940"/>
    </location>
</feature>
<feature type="topological domain" description="Extracellular" evidence="2">
    <location>
        <begin position="941"/>
        <end position="945"/>
    </location>
</feature>
<feature type="transmembrane region" description="Helical" evidence="2">
    <location>
        <begin position="946"/>
        <end position="966"/>
    </location>
</feature>
<feature type="topological domain" description="Cytoplasmic" evidence="2">
    <location>
        <begin position="967"/>
        <end position="992"/>
    </location>
</feature>
<feature type="transmembrane region" description="Helical" evidence="2">
    <location>
        <begin position="993"/>
        <end position="1010"/>
    </location>
</feature>
<feature type="topological domain" description="Extracellular" evidence="2">
    <location>
        <begin position="1011"/>
        <end position="1015"/>
    </location>
</feature>
<feature type="transmembrane region" description="Helical" evidence="2">
    <location>
        <begin position="1016"/>
        <end position="1033"/>
    </location>
</feature>
<feature type="topological domain" description="Cytoplasmic" evidence="2">
    <location>
        <begin position="1034"/>
        <end position="1112"/>
    </location>
</feature>
<feature type="region of interest" description="Disordered" evidence="3">
    <location>
        <begin position="1"/>
        <end position="80"/>
    </location>
</feature>
<feature type="region of interest" description="Disordered" evidence="3">
    <location>
        <begin position="220"/>
        <end position="255"/>
    </location>
</feature>
<feature type="region of interest" description="Disordered" evidence="3">
    <location>
        <begin position="439"/>
        <end position="469"/>
    </location>
</feature>
<feature type="region of interest" description="Disordered" evidence="3">
    <location>
        <begin position="1055"/>
        <end position="1112"/>
    </location>
</feature>
<feature type="compositionally biased region" description="Basic and acidic residues" evidence="3">
    <location>
        <begin position="1"/>
        <end position="13"/>
    </location>
</feature>
<feature type="compositionally biased region" description="Polar residues" evidence="3">
    <location>
        <begin position="53"/>
        <end position="67"/>
    </location>
</feature>
<feature type="compositionally biased region" description="Polar residues" evidence="3">
    <location>
        <begin position="233"/>
        <end position="244"/>
    </location>
</feature>
<feature type="compositionally biased region" description="Gly residues" evidence="3">
    <location>
        <begin position="444"/>
        <end position="465"/>
    </location>
</feature>
<feature type="compositionally biased region" description="Basic and acidic residues" evidence="3">
    <location>
        <begin position="1055"/>
        <end position="1074"/>
    </location>
</feature>
<gene>
    <name evidence="8" type="primary">Slc4a5</name>
</gene>
<name>S4A5_RAT</name>
<comment type="function">
    <text evidence="1">Mediates sodium- and bicarbonate-dependent electrogenic sodium bicarbonate cotransport, with a Na(+):HCO3(-) stoichiometry varying from 1:2 to 1:3.</text>
</comment>
<comment type="catalytic activity">
    <reaction evidence="1">
        <text>2 hydrogencarbonate(out) + Na(+)(out) = 2 hydrogencarbonate(in) + Na(+)(in)</text>
        <dbReference type="Rhea" id="RHEA:72215"/>
        <dbReference type="ChEBI" id="CHEBI:17544"/>
        <dbReference type="ChEBI" id="CHEBI:29101"/>
    </reaction>
</comment>
<comment type="catalytic activity">
    <reaction evidence="1">
        <text>3 hydrogencarbonate(out) + Na(+)(out) = 3 hydrogencarbonate(in) + Na(+)(in)</text>
        <dbReference type="Rhea" id="RHEA:72219"/>
        <dbReference type="ChEBI" id="CHEBI:17544"/>
        <dbReference type="ChEBI" id="CHEBI:29101"/>
    </reaction>
</comment>
<comment type="subcellular location">
    <subcellularLocation>
        <location evidence="5">Basolateral cell membrane</location>
        <topology evidence="2">Multi-pass membrane protein</topology>
    </subcellularLocation>
    <subcellularLocation>
        <location evidence="1">Apical cell membrane</location>
        <topology evidence="2">Multi-pass membrane protein</topology>
    </subcellularLocation>
    <text evidence="5">Localized predominantly to the basolateral sinusoidal membrane in hepatocytes.</text>
</comment>
<comment type="tissue specificity">
    <text evidence="4 5">Observed in hepatocytes and in the apical region of bile duct intrahepatic cholangiocytes of liver. Also observed in uroepithelium cells lining the outer pelvic wall of the kidney (at protein level). Highly expressed in colon, distal colon, liver, kidney and testis. Moderate expression in duodenum and stomach and weak expression in heart. In kidney, very weakly expressed in the inner medulla, but abundantly expressed in cortex and outer medulla in the medullary thick ascending and cortical thick ascending limbs of the loop of Henle.</text>
</comment>
<comment type="similarity">
    <text evidence="2">Belongs to the anion exchanger (TC 2.A.31) family.</text>
</comment>
<sequence length="1112" mass="123944">MKVEEKAGVKKLEPTSYRRRHPEQDFPSIHIGFPVPGYSQRKSDSKGHLSGLQRVQWSLQPDKSQQDLAGPDGIKASSLGGSVDFTKRIRSPAAEQLQDILGEEDEAPNPTLFTEMDTLQHDGDQMEWKESARWIKFEEKVEEGGERWSKPHVSTLSLHSLFELRTCLQTGTVLLDLDSGSLPQIIDDVIEKQIEGGLLRPELRERVSYVLLRKHRHQTKKPIHRSLADIGKSVSTTNRSSARSPSAGPTLHHSTEDLRIRQSTSYGHLCHAQSRSMNDISHTPNTDQRKNKFMKKIPKDSEASNVLVGEVDFLDQPFIAFVRLAQSSMLGGVTEVPVPTRFLFILLGPSGRAKSYNEIGRAIATLMVDDLFSDVAYKARNREDLIAGVDEFLDEVIVLPPGEWDPNIRIEPPKKVPSADKRKSVFSLAELGQMNGSVGRSGASAGGGGSGGGAGGSGAGGGGSGNEAEMPAMHEIGEELIWTGRFFGGLRLDVKRKLPWFPSDFYDGFHIQSISAVLFIYLGCITNAITFGGLLGDATDNYQGVMESFLGTAMAGSLFCLFSGQPLIILSSTGPILIFEKLLFDFSKANGLDYMEFRLWIGLHSAIQCLILVATDASFIIKYITRFTEEGFSTLISFIFIYDAIKKMIGAFKYYPINTDFKPDSITTYKCECVAPDTVNTTTVNDSALLVPNTNMSVYTPLNLTALDWSLLSKKECLSYGGRLLGSSCQFVPDLALMSFILFFGTYSMTLTLKKFKFSRYFPTKVRTLVADFSIVFSILLFCGIDACFGLQTPKLHVPNVIKPTRPDRGWFVAPFGKNPWWVYPASILPALLVTILIFMDQQITAVIVNRKENKLRKAAGYHLDLFWVGILMALCSFMGLPWYVAATVISIAHIDSLKMETETSAPGEQPQFLGVREQRVTGVMVFILTGISVFLAPILKYIPMPVLYGVFLYMGVASLNGIQFWDRCKLFLMPAKHQPDHAFLRHVPLRRIHLFTLVQILCLALLWILKSTMAAIIFPVMILGLIIVRRLLDLIFSQHDLAWIDNILPEKEKKESDRKKRRKEVHENTDKEPQFLPPSVVKIPMEGIPSDPQNGIHCVGRKRSSSWSHSL</sequence>
<dbReference type="EMBL" id="AY496959">
    <property type="protein sequence ID" value="AAS98674.1"/>
    <property type="molecule type" value="mRNA"/>
</dbReference>
<dbReference type="RefSeq" id="NP_997677.1">
    <property type="nucleotide sequence ID" value="NM_212512.2"/>
</dbReference>
<dbReference type="SMR" id="Q6RI88"/>
<dbReference type="FunCoup" id="Q6RI88">
    <property type="interactions" value="34"/>
</dbReference>
<dbReference type="STRING" id="10116.ENSRNOP00000014249"/>
<dbReference type="CarbonylDB" id="Q6RI88"/>
<dbReference type="PhosphoSitePlus" id="Q6RI88"/>
<dbReference type="PaxDb" id="10116-ENSRNOP00000014249"/>
<dbReference type="GeneID" id="297386"/>
<dbReference type="KEGG" id="rno:297386"/>
<dbReference type="UCSC" id="RGD:1303009">
    <property type="organism name" value="rat"/>
</dbReference>
<dbReference type="AGR" id="RGD:1303009"/>
<dbReference type="CTD" id="57835"/>
<dbReference type="RGD" id="1303009">
    <property type="gene designation" value="Slc4a5"/>
</dbReference>
<dbReference type="VEuPathDB" id="HostDB:ENSRNOG00000010378"/>
<dbReference type="eggNOG" id="KOG1172">
    <property type="taxonomic scope" value="Eukaryota"/>
</dbReference>
<dbReference type="InParanoid" id="Q6RI88"/>
<dbReference type="PhylomeDB" id="Q6RI88"/>
<dbReference type="TreeFam" id="TF313630"/>
<dbReference type="Reactome" id="R-RNO-425381">
    <property type="pathway name" value="Bicarbonate transporters"/>
</dbReference>
<dbReference type="PRO" id="PR:Q6RI88"/>
<dbReference type="Proteomes" id="UP000002494">
    <property type="component" value="Chromosome 4"/>
</dbReference>
<dbReference type="Bgee" id="ENSRNOG00000010378">
    <property type="expression patterns" value="Expressed in adult mammalian kidney and 9 other cell types or tissues"/>
</dbReference>
<dbReference type="ExpressionAtlas" id="Q6RI88">
    <property type="expression patterns" value="baseline"/>
</dbReference>
<dbReference type="GO" id="GO:0016324">
    <property type="term" value="C:apical plasma membrane"/>
    <property type="evidence" value="ECO:0000250"/>
    <property type="project" value="UniProtKB"/>
</dbReference>
<dbReference type="GO" id="GO:0016323">
    <property type="term" value="C:basolateral plasma membrane"/>
    <property type="evidence" value="ECO:0000314"/>
    <property type="project" value="UniProtKB"/>
</dbReference>
<dbReference type="GO" id="GO:0005886">
    <property type="term" value="C:plasma membrane"/>
    <property type="evidence" value="ECO:0000318"/>
    <property type="project" value="GO_Central"/>
</dbReference>
<dbReference type="GO" id="GO:0008509">
    <property type="term" value="F:monoatomic anion transmembrane transporter activity"/>
    <property type="evidence" value="ECO:0007669"/>
    <property type="project" value="InterPro"/>
</dbReference>
<dbReference type="GO" id="GO:0008510">
    <property type="term" value="F:sodium:bicarbonate symporter activity"/>
    <property type="evidence" value="ECO:0000250"/>
    <property type="project" value="UniProtKB"/>
</dbReference>
<dbReference type="GO" id="GO:0005452">
    <property type="term" value="F:solute:inorganic anion antiporter activity"/>
    <property type="evidence" value="ECO:0000304"/>
    <property type="project" value="RGD"/>
</dbReference>
<dbReference type="GO" id="GO:0015701">
    <property type="term" value="P:bicarbonate transport"/>
    <property type="evidence" value="ECO:0000318"/>
    <property type="project" value="GO_Central"/>
</dbReference>
<dbReference type="GO" id="GO:0033326">
    <property type="term" value="P:cerebrospinal fluid secretion"/>
    <property type="evidence" value="ECO:0000266"/>
    <property type="project" value="RGD"/>
</dbReference>
<dbReference type="GO" id="GO:0002064">
    <property type="term" value="P:epithelial cell development"/>
    <property type="evidence" value="ECO:0000266"/>
    <property type="project" value="RGD"/>
</dbReference>
<dbReference type="GO" id="GO:0048311">
    <property type="term" value="P:mitochondrion distribution"/>
    <property type="evidence" value="ECO:0000266"/>
    <property type="project" value="RGD"/>
</dbReference>
<dbReference type="GO" id="GO:0006820">
    <property type="term" value="P:monoatomic anion transport"/>
    <property type="evidence" value="ECO:0000304"/>
    <property type="project" value="RGD"/>
</dbReference>
<dbReference type="GO" id="GO:0006811">
    <property type="term" value="P:monoatomic ion transport"/>
    <property type="evidence" value="ECO:0000266"/>
    <property type="project" value="RGD"/>
</dbReference>
<dbReference type="GO" id="GO:0010468">
    <property type="term" value="P:regulation of gene expression"/>
    <property type="evidence" value="ECO:0000266"/>
    <property type="project" value="RGD"/>
</dbReference>
<dbReference type="GO" id="GO:0051453">
    <property type="term" value="P:regulation of intracellular pH"/>
    <property type="evidence" value="ECO:0000318"/>
    <property type="project" value="GO_Central"/>
</dbReference>
<dbReference type="GO" id="GO:0006885">
    <property type="term" value="P:regulation of pH"/>
    <property type="evidence" value="ECO:0000304"/>
    <property type="project" value="RGD"/>
</dbReference>
<dbReference type="GO" id="GO:0003073">
    <property type="term" value="P:regulation of systemic arterial blood pressure"/>
    <property type="evidence" value="ECO:0000266"/>
    <property type="project" value="RGD"/>
</dbReference>
<dbReference type="GO" id="GO:0003014">
    <property type="term" value="P:renal system process"/>
    <property type="evidence" value="ECO:0000266"/>
    <property type="project" value="RGD"/>
</dbReference>
<dbReference type="GO" id="GO:0060041">
    <property type="term" value="P:retina development in camera-type eye"/>
    <property type="evidence" value="ECO:0000266"/>
    <property type="project" value="RGD"/>
</dbReference>
<dbReference type="GO" id="GO:0055085">
    <property type="term" value="P:transmembrane transport"/>
    <property type="evidence" value="ECO:0000318"/>
    <property type="project" value="GO_Central"/>
</dbReference>
<dbReference type="FunFam" id="1.10.287.570:FF:000001">
    <property type="entry name" value="Anion exchange protein"/>
    <property type="match status" value="1"/>
</dbReference>
<dbReference type="FunFam" id="3.40.930.10:FF:000002">
    <property type="entry name" value="Anion exchange protein"/>
    <property type="match status" value="1"/>
</dbReference>
<dbReference type="Gene3D" id="1.10.287.570">
    <property type="entry name" value="Helical hairpin bin"/>
    <property type="match status" value="1"/>
</dbReference>
<dbReference type="Gene3D" id="3.40.930.10">
    <property type="entry name" value="Mannitol-specific EII, Chain A"/>
    <property type="match status" value="1"/>
</dbReference>
<dbReference type="InterPro" id="IPR013769">
    <property type="entry name" value="Band3_cytoplasmic_dom"/>
</dbReference>
<dbReference type="InterPro" id="IPR011531">
    <property type="entry name" value="HCO3_transpt-like_TM_dom"/>
</dbReference>
<dbReference type="InterPro" id="IPR003020">
    <property type="entry name" value="HCO3_transpt_euk"/>
</dbReference>
<dbReference type="InterPro" id="IPR003024">
    <property type="entry name" value="Na/HCO3_transpt"/>
</dbReference>
<dbReference type="InterPro" id="IPR016152">
    <property type="entry name" value="PTrfase/Anion_transptr"/>
</dbReference>
<dbReference type="NCBIfam" id="TIGR00834">
    <property type="entry name" value="ae"/>
    <property type="match status" value="1"/>
</dbReference>
<dbReference type="PANTHER" id="PTHR11453">
    <property type="entry name" value="ANION EXCHANGE PROTEIN"/>
    <property type="match status" value="1"/>
</dbReference>
<dbReference type="PANTHER" id="PTHR11453:SF20">
    <property type="entry name" value="ELECTROGENIC SODIUM BICARBONATE COTRANSPORTER 4"/>
    <property type="match status" value="1"/>
</dbReference>
<dbReference type="Pfam" id="PF07565">
    <property type="entry name" value="Band_3_cyto"/>
    <property type="match status" value="1"/>
</dbReference>
<dbReference type="Pfam" id="PF00955">
    <property type="entry name" value="HCO3_cotransp"/>
    <property type="match status" value="1"/>
</dbReference>
<dbReference type="PRINTS" id="PR01231">
    <property type="entry name" value="HCO3TRNSPORT"/>
</dbReference>
<dbReference type="PRINTS" id="PR01232">
    <property type="entry name" value="NAHCO3TRSPRT"/>
</dbReference>
<dbReference type="SUPFAM" id="SSF55804">
    <property type="entry name" value="Phoshotransferase/anion transport protein"/>
    <property type="match status" value="1"/>
</dbReference>
<evidence type="ECO:0000250" key="1">
    <source>
        <dbReference type="UniProtKB" id="Q9BY07"/>
    </source>
</evidence>
<evidence type="ECO:0000255" key="2"/>
<evidence type="ECO:0000256" key="3">
    <source>
        <dbReference type="SAM" id="MobiDB-lite"/>
    </source>
</evidence>
<evidence type="ECO:0000269" key="4">
    <source>
    </source>
</evidence>
<evidence type="ECO:0000269" key="5">
    <source>
    </source>
</evidence>
<evidence type="ECO:0000305" key="6"/>
<evidence type="ECO:0000312" key="7">
    <source>
        <dbReference type="EMBL" id="AAS98674.1"/>
    </source>
</evidence>
<evidence type="ECO:0000312" key="8">
    <source>
        <dbReference type="RGD" id="1303009"/>
    </source>
</evidence>
<proteinExistence type="evidence at protein level"/>
<accession>Q6RI88</accession>
<organism>
    <name type="scientific">Rattus norvegicus</name>
    <name type="common">Rat</name>
    <dbReference type="NCBI Taxonomy" id="10116"/>
    <lineage>
        <taxon>Eukaryota</taxon>
        <taxon>Metazoa</taxon>
        <taxon>Chordata</taxon>
        <taxon>Craniata</taxon>
        <taxon>Vertebrata</taxon>
        <taxon>Euteleostomi</taxon>
        <taxon>Mammalia</taxon>
        <taxon>Eutheria</taxon>
        <taxon>Euarchontoglires</taxon>
        <taxon>Glires</taxon>
        <taxon>Rodentia</taxon>
        <taxon>Myomorpha</taxon>
        <taxon>Muroidea</taxon>
        <taxon>Muridae</taxon>
        <taxon>Murinae</taxon>
        <taxon>Rattus</taxon>
    </lineage>
</organism>
<protein>
    <recommendedName>
        <fullName>Electrogenic sodium bicarbonate cotransporter 4</fullName>
    </recommendedName>
    <alternativeName>
        <fullName>Solute carrier family 4 member 5</fullName>
    </alternativeName>
</protein>
<reference evidence="6 7" key="1">
    <citation type="journal article" date="2004" name="Am. J. Physiol.">
        <title>Expression and localization of rat NBC4c in liver and renal uroepithelium.</title>
        <authorList>
            <person name="Abuladze N."/>
            <person name="Pushkin A."/>
            <person name="Tatishchev S."/>
            <person name="Newman D."/>
            <person name="Sassani P."/>
            <person name="Kurtz I."/>
        </authorList>
    </citation>
    <scope>NUCLEOTIDE SEQUENCE [MRNA]</scope>
    <scope>SUBCELLULAR LOCATION</scope>
    <scope>TISSUE SPECIFICITY</scope>
    <source>
        <strain evidence="7">Sprague-Dawley</strain>
        <tissue evidence="5">Liver</tissue>
    </source>
</reference>
<reference evidence="6" key="2">
    <citation type="journal article" date="2003" name="Am. J. Physiol.">
        <title>Expression of the Na+-HCO-3 cotransporter NBC4 in rat kidney and characterization of a novel NBC4 variant.</title>
        <authorList>
            <person name="Xu J."/>
            <person name="Wang Z."/>
            <person name="Barone S."/>
            <person name="Petrovic M."/>
            <person name="Amlal H."/>
            <person name="Conforti L."/>
            <person name="Petrovic S."/>
            <person name="Soleimani M."/>
        </authorList>
    </citation>
    <scope>TISSUE SPECIFICITY</scope>
</reference>